<evidence type="ECO:0000269" key="1">
    <source>
    </source>
</evidence>
<evidence type="ECO:0000269" key="2">
    <source>
    </source>
</evidence>
<evidence type="ECO:0000269" key="3">
    <source>
    </source>
</evidence>
<evidence type="ECO:0000269" key="4">
    <source>
    </source>
</evidence>
<evidence type="ECO:0000269" key="5">
    <source>
    </source>
</evidence>
<evidence type="ECO:0000269" key="6">
    <source>
    </source>
</evidence>
<evidence type="ECO:0000269" key="7">
    <source>
    </source>
</evidence>
<evidence type="ECO:0000269" key="8">
    <source>
    </source>
</evidence>
<evidence type="ECO:0000269" key="9">
    <source>
    </source>
</evidence>
<evidence type="ECO:0000269" key="10">
    <source>
    </source>
</evidence>
<evidence type="ECO:0000269" key="11">
    <source>
    </source>
</evidence>
<evidence type="ECO:0000269" key="12">
    <source>
    </source>
</evidence>
<evidence type="ECO:0000269" key="13">
    <source>
    </source>
</evidence>
<evidence type="ECO:0000269" key="14">
    <source>
    </source>
</evidence>
<evidence type="ECO:0000269" key="15">
    <source>
    </source>
</evidence>
<evidence type="ECO:0000269" key="16">
    <source>
    </source>
</evidence>
<evidence type="ECO:0000269" key="17">
    <source>
    </source>
</evidence>
<evidence type="ECO:0000269" key="18">
    <source>
    </source>
</evidence>
<evidence type="ECO:0000269" key="19">
    <source>
    </source>
</evidence>
<evidence type="ECO:0000269" key="20">
    <source>
    </source>
</evidence>
<evidence type="ECO:0000269" key="21">
    <source>
    </source>
</evidence>
<evidence type="ECO:0000269" key="22">
    <source>
    </source>
</evidence>
<evidence type="ECO:0000303" key="23">
    <source>
    </source>
</evidence>
<evidence type="ECO:0000305" key="24"/>
<evidence type="ECO:0000305" key="25">
    <source>
    </source>
</evidence>
<evidence type="ECO:0000305" key="26">
    <source>
    </source>
</evidence>
<evidence type="ECO:0007744" key="27">
    <source>
        <dbReference type="PDB" id="1QPB"/>
    </source>
</evidence>
<evidence type="ECO:0007744" key="28">
    <source>
    </source>
</evidence>
<evidence type="ECO:0007744" key="29">
    <source>
    </source>
</evidence>
<evidence type="ECO:0007744" key="30">
    <source>
    </source>
</evidence>
<evidence type="ECO:0007744" key="31">
    <source>
    </source>
</evidence>
<evidence type="ECO:0007829" key="32">
    <source>
        <dbReference type="PDB" id="1QPB"/>
    </source>
</evidence>
<evidence type="ECO:0007829" key="33">
    <source>
        <dbReference type="PDB" id="2VK8"/>
    </source>
</evidence>
<dbReference type="EC" id="4.1.1.-" evidence="12 14"/>
<dbReference type="EC" id="4.1.1.43" evidence="7"/>
<dbReference type="EC" id="4.1.1.72" evidence="5 22"/>
<dbReference type="EC" id="4.1.1.74" evidence="7"/>
<dbReference type="EMBL" id="X04675">
    <property type="protein sequence ID" value="CAA28380.1"/>
    <property type="molecule type" value="Genomic_DNA"/>
</dbReference>
<dbReference type="EMBL" id="X77316">
    <property type="protein sequence ID" value="CAA54522.1"/>
    <property type="molecule type" value="Genomic_DNA"/>
</dbReference>
<dbReference type="EMBL" id="X94607">
    <property type="protein sequence ID" value="CAA64291.1"/>
    <property type="molecule type" value="Genomic_DNA"/>
</dbReference>
<dbReference type="EMBL" id="Z73216">
    <property type="protein sequence ID" value="CAA97573.1"/>
    <property type="molecule type" value="Genomic_DNA"/>
</dbReference>
<dbReference type="EMBL" id="Z73217">
    <property type="protein sequence ID" value="CAA97575.1"/>
    <property type="molecule type" value="Genomic_DNA"/>
</dbReference>
<dbReference type="EMBL" id="X77312">
    <property type="protein sequence ID" value="CAA54518.1"/>
    <property type="molecule type" value="Genomic_DNA"/>
</dbReference>
<dbReference type="EMBL" id="X77315">
    <property type="protein sequence ID" value="CAA54521.1"/>
    <property type="molecule type" value="Genomic_DNA"/>
</dbReference>
<dbReference type="EMBL" id="BK006945">
    <property type="protein sequence ID" value="DAA09362.1"/>
    <property type="molecule type" value="Genomic_DNA"/>
</dbReference>
<dbReference type="PIR" id="S64871">
    <property type="entry name" value="DCBYP"/>
</dbReference>
<dbReference type="RefSeq" id="NP_013145.1">
    <property type="nucleotide sequence ID" value="NM_001181931.1"/>
</dbReference>
<dbReference type="PDB" id="1PVD">
    <property type="method" value="X-ray"/>
    <property type="resolution" value="2.30 A"/>
    <property type="chains" value="A/B=2-556"/>
</dbReference>
<dbReference type="PDB" id="1PYD">
    <property type="method" value="X-ray"/>
    <property type="resolution" value="2.40 A"/>
    <property type="chains" value="A/B=1-556"/>
</dbReference>
<dbReference type="PDB" id="1QPB">
    <property type="method" value="X-ray"/>
    <property type="resolution" value="2.40 A"/>
    <property type="chains" value="A/B=1-563"/>
</dbReference>
<dbReference type="PDB" id="2VK1">
    <property type="method" value="X-ray"/>
    <property type="resolution" value="1.71 A"/>
    <property type="chains" value="A/B/C/D=1-563"/>
</dbReference>
<dbReference type="PDB" id="2VK8">
    <property type="method" value="X-ray"/>
    <property type="resolution" value="1.42 A"/>
    <property type="chains" value="A/B/C/D=1-563"/>
</dbReference>
<dbReference type="PDB" id="2W93">
    <property type="method" value="X-ray"/>
    <property type="resolution" value="1.60 A"/>
    <property type="chains" value="A/B/C/D=1-563"/>
</dbReference>
<dbReference type="PDBsum" id="1PVD"/>
<dbReference type="PDBsum" id="1PYD"/>
<dbReference type="PDBsum" id="1QPB"/>
<dbReference type="PDBsum" id="2VK1"/>
<dbReference type="PDBsum" id="2VK8"/>
<dbReference type="PDBsum" id="2W93"/>
<dbReference type="SMR" id="P06169"/>
<dbReference type="BioGRID" id="31319">
    <property type="interactions" value="287"/>
</dbReference>
<dbReference type="DIP" id="DIP-6773N"/>
<dbReference type="FunCoup" id="P06169">
    <property type="interactions" value="1211"/>
</dbReference>
<dbReference type="IntAct" id="P06169">
    <property type="interactions" value="187"/>
</dbReference>
<dbReference type="MINT" id="P06169"/>
<dbReference type="STRING" id="4932.YLR044C"/>
<dbReference type="CarbonylDB" id="P06169"/>
<dbReference type="iPTMnet" id="P06169"/>
<dbReference type="PaxDb" id="4932-YLR044C"/>
<dbReference type="PeptideAtlas" id="P06169"/>
<dbReference type="TopDownProteomics" id="P06169"/>
<dbReference type="EnsemblFungi" id="YLR044C_mRNA">
    <property type="protein sequence ID" value="YLR044C"/>
    <property type="gene ID" value="YLR044C"/>
</dbReference>
<dbReference type="GeneID" id="850733"/>
<dbReference type="KEGG" id="sce:YLR044C"/>
<dbReference type="AGR" id="SGD:S000004034"/>
<dbReference type="SGD" id="S000004034">
    <property type="gene designation" value="PDC1"/>
</dbReference>
<dbReference type="VEuPathDB" id="FungiDB:YLR044C"/>
<dbReference type="eggNOG" id="KOG1184">
    <property type="taxonomic scope" value="Eukaryota"/>
</dbReference>
<dbReference type="GeneTree" id="ENSGT00940000176336"/>
<dbReference type="HOGENOM" id="CLU_013748_0_2_1"/>
<dbReference type="InParanoid" id="P06169"/>
<dbReference type="OMA" id="IHGPEQR"/>
<dbReference type="OrthoDB" id="3970464at2759"/>
<dbReference type="BioCyc" id="MetaCyc:MONOMER3O-117"/>
<dbReference type="BioCyc" id="YEAST:MONOMER3O-117"/>
<dbReference type="BRENDA" id="4.1.1.1">
    <property type="organism ID" value="984"/>
</dbReference>
<dbReference type="SABIO-RK" id="P06169"/>
<dbReference type="UniPathway" id="UPA00206"/>
<dbReference type="UniPathway" id="UPA00866"/>
<dbReference type="BioGRID-ORCS" id="850733">
    <property type="hits" value="1 hit in 10 CRISPR screens"/>
</dbReference>
<dbReference type="CD-CODE" id="A777E0F8">
    <property type="entry name" value="P-body"/>
</dbReference>
<dbReference type="EvolutionaryTrace" id="P06169"/>
<dbReference type="PRO" id="PR:P06169"/>
<dbReference type="Proteomes" id="UP000002311">
    <property type="component" value="Chromosome XII"/>
</dbReference>
<dbReference type="RNAct" id="P06169">
    <property type="molecule type" value="protein"/>
</dbReference>
<dbReference type="GO" id="GO:0005737">
    <property type="term" value="C:cytoplasm"/>
    <property type="evidence" value="ECO:0007005"/>
    <property type="project" value="SGD"/>
</dbReference>
<dbReference type="GO" id="GO:0005829">
    <property type="term" value="C:cytosol"/>
    <property type="evidence" value="ECO:0000314"/>
    <property type="project" value="SGD"/>
</dbReference>
<dbReference type="GO" id="GO:0005634">
    <property type="term" value="C:nucleus"/>
    <property type="evidence" value="ECO:0000314"/>
    <property type="project" value="SGD"/>
</dbReference>
<dbReference type="GO" id="GO:0047433">
    <property type="term" value="F:branched-chain-2-oxoacid decarboxylase activity"/>
    <property type="evidence" value="ECO:0000315"/>
    <property type="project" value="SGD"/>
</dbReference>
<dbReference type="GO" id="GO:0047434">
    <property type="term" value="F:indolepyruvate decarboxylase activity"/>
    <property type="evidence" value="ECO:0007669"/>
    <property type="project" value="UniProtKB-EC"/>
</dbReference>
<dbReference type="GO" id="GO:0000287">
    <property type="term" value="F:magnesium ion binding"/>
    <property type="evidence" value="ECO:0007669"/>
    <property type="project" value="InterPro"/>
</dbReference>
<dbReference type="GO" id="GO:0050177">
    <property type="term" value="F:phenylpyruvate decarboxylase activity"/>
    <property type="evidence" value="ECO:0007669"/>
    <property type="project" value="UniProtKB-EC"/>
</dbReference>
<dbReference type="GO" id="GO:0004737">
    <property type="term" value="F:pyruvate decarboxylase activity"/>
    <property type="evidence" value="ECO:0000314"/>
    <property type="project" value="SGD"/>
</dbReference>
<dbReference type="GO" id="GO:0030976">
    <property type="term" value="F:thiamine pyrophosphate binding"/>
    <property type="evidence" value="ECO:0007669"/>
    <property type="project" value="InterPro"/>
</dbReference>
<dbReference type="GO" id="GO:0000949">
    <property type="term" value="P:aromatic amino acid family catabolic process to alcohol via Ehrlich pathway"/>
    <property type="evidence" value="ECO:0000316"/>
    <property type="project" value="SGD"/>
</dbReference>
<dbReference type="GO" id="GO:0009083">
    <property type="term" value="P:branched-chain amino acid catabolic process"/>
    <property type="evidence" value="ECO:0007669"/>
    <property type="project" value="UniProtKB-KW"/>
</dbReference>
<dbReference type="GO" id="GO:0019655">
    <property type="term" value="P:glycolytic fermentation to ethanol"/>
    <property type="evidence" value="ECO:0000314"/>
    <property type="project" value="SGD"/>
</dbReference>
<dbReference type="GO" id="GO:0006559">
    <property type="term" value="P:L-phenylalanine catabolic process"/>
    <property type="evidence" value="ECO:0000316"/>
    <property type="project" value="SGD"/>
</dbReference>
<dbReference type="GO" id="GO:0006569">
    <property type="term" value="P:L-tryptophan catabolic process"/>
    <property type="evidence" value="ECO:0000316"/>
    <property type="project" value="SGD"/>
</dbReference>
<dbReference type="CDD" id="cd02005">
    <property type="entry name" value="TPP_PDC_IPDC"/>
    <property type="match status" value="1"/>
</dbReference>
<dbReference type="CDD" id="cd07038">
    <property type="entry name" value="TPP_PYR_PDC_IPDC_like"/>
    <property type="match status" value="1"/>
</dbReference>
<dbReference type="FunFam" id="3.40.50.1220:FF:000018">
    <property type="entry name" value="Pyruvate decarboxylase isozyme"/>
    <property type="match status" value="1"/>
</dbReference>
<dbReference type="FunFam" id="3.40.50.970:FF:000019">
    <property type="entry name" value="Pyruvate decarboxylase isozyme"/>
    <property type="match status" value="1"/>
</dbReference>
<dbReference type="FunFam" id="3.40.50.970:FF:000024">
    <property type="entry name" value="Pyruvate decarboxylase isozyme"/>
    <property type="match status" value="1"/>
</dbReference>
<dbReference type="Gene3D" id="3.40.50.970">
    <property type="match status" value="2"/>
</dbReference>
<dbReference type="Gene3D" id="3.40.50.1220">
    <property type="entry name" value="TPP-binding domain"/>
    <property type="match status" value="1"/>
</dbReference>
<dbReference type="InterPro" id="IPR029035">
    <property type="entry name" value="DHS-like_NAD/FAD-binding_dom"/>
</dbReference>
<dbReference type="InterPro" id="IPR012110">
    <property type="entry name" value="PDC/IPDC-like"/>
</dbReference>
<dbReference type="InterPro" id="IPR029061">
    <property type="entry name" value="THDP-binding"/>
</dbReference>
<dbReference type="InterPro" id="IPR012000">
    <property type="entry name" value="Thiamin_PyroP_enz_cen_dom"/>
</dbReference>
<dbReference type="InterPro" id="IPR012001">
    <property type="entry name" value="Thiamin_PyroP_enz_TPP-bd_dom"/>
</dbReference>
<dbReference type="InterPro" id="IPR000399">
    <property type="entry name" value="TPP-bd_CS"/>
</dbReference>
<dbReference type="InterPro" id="IPR011766">
    <property type="entry name" value="TPP_enzyme_TPP-bd"/>
</dbReference>
<dbReference type="InterPro" id="IPR047214">
    <property type="entry name" value="TPP_PDC_IPDC"/>
</dbReference>
<dbReference type="InterPro" id="IPR047213">
    <property type="entry name" value="TPP_PYR_PDC_IPDC-like"/>
</dbReference>
<dbReference type="PANTHER" id="PTHR43452">
    <property type="entry name" value="PYRUVATE DECARBOXYLASE"/>
    <property type="match status" value="1"/>
</dbReference>
<dbReference type="PANTHER" id="PTHR43452:SF30">
    <property type="entry name" value="PYRUVATE DECARBOXYLASE ISOZYME 1-RELATED"/>
    <property type="match status" value="1"/>
</dbReference>
<dbReference type="Pfam" id="PF02775">
    <property type="entry name" value="TPP_enzyme_C"/>
    <property type="match status" value="1"/>
</dbReference>
<dbReference type="Pfam" id="PF00205">
    <property type="entry name" value="TPP_enzyme_M"/>
    <property type="match status" value="1"/>
</dbReference>
<dbReference type="Pfam" id="PF02776">
    <property type="entry name" value="TPP_enzyme_N"/>
    <property type="match status" value="1"/>
</dbReference>
<dbReference type="PIRSF" id="PIRSF036565">
    <property type="entry name" value="Pyruvt_ip_decrb"/>
    <property type="match status" value="1"/>
</dbReference>
<dbReference type="SUPFAM" id="SSF52467">
    <property type="entry name" value="DHS-like NAD/FAD-binding domain"/>
    <property type="match status" value="1"/>
</dbReference>
<dbReference type="SUPFAM" id="SSF52518">
    <property type="entry name" value="Thiamin diphosphate-binding fold (THDP-binding)"/>
    <property type="match status" value="2"/>
</dbReference>
<dbReference type="PROSITE" id="PS00187">
    <property type="entry name" value="TPP_ENZYMES"/>
    <property type="match status" value="1"/>
</dbReference>
<proteinExistence type="evidence at protein level"/>
<feature type="initiator methionine" description="Removed" evidence="3 19">
    <location>
        <position position="1"/>
    </location>
</feature>
<feature type="chain" id="PRO_0000090770" description="Pyruvate decarboxylase isozyme 1">
    <location>
        <begin position="2"/>
        <end position="563"/>
    </location>
</feature>
<feature type="binding site" evidence="25">
    <location>
        <position position="28"/>
    </location>
    <ligand>
        <name>pyruvate</name>
        <dbReference type="ChEBI" id="CHEBI:15361"/>
        <label>1</label>
        <note>substrate; ligand shared between two neighboring subunits</note>
    </ligand>
</feature>
<feature type="binding site" evidence="25 27">
    <location>
        <position position="115"/>
    </location>
    <ligand>
        <name>pyruvate</name>
        <dbReference type="ChEBI" id="CHEBI:15361"/>
        <label>1</label>
        <note>substrate; ligand shared between two neighboring subunits</note>
    </ligand>
</feature>
<feature type="binding site" evidence="25">
    <location>
        <position position="157"/>
    </location>
    <ligand>
        <name>pyruvate</name>
        <dbReference type="ChEBI" id="CHEBI:15361"/>
        <label>2</label>
        <note>allosteric activator</note>
    </ligand>
</feature>
<feature type="binding site" evidence="25 27">
    <location>
        <position position="224"/>
    </location>
    <ligand>
        <name>pyruvate</name>
        <dbReference type="ChEBI" id="CHEBI:15361"/>
        <label>2</label>
        <note>allosteric activator</note>
    </ligand>
</feature>
<feature type="binding site" evidence="4 27">
    <location>
        <position position="390"/>
    </location>
    <ligand>
        <name>thiamine diphosphate</name>
        <dbReference type="ChEBI" id="CHEBI:58937"/>
    </ligand>
</feature>
<feature type="binding site" evidence="4 27">
    <location>
        <begin position="413"/>
        <end position="415"/>
    </location>
    <ligand>
        <name>thiamine diphosphate</name>
        <dbReference type="ChEBI" id="CHEBI:58937"/>
    </ligand>
</feature>
<feature type="binding site" evidence="4 27">
    <location>
        <position position="444"/>
    </location>
    <ligand>
        <name>Mg(2+)</name>
        <dbReference type="ChEBI" id="CHEBI:18420"/>
    </ligand>
</feature>
<feature type="binding site" evidence="4 27">
    <location>
        <begin position="445"/>
        <end position="446"/>
    </location>
    <ligand>
        <name>thiamine diphosphate</name>
        <dbReference type="ChEBI" id="CHEBI:58937"/>
    </ligand>
</feature>
<feature type="binding site" evidence="4 27">
    <location>
        <begin position="471"/>
        <end position="476"/>
    </location>
    <ligand>
        <name>thiamine diphosphate</name>
        <dbReference type="ChEBI" id="CHEBI:58937"/>
    </ligand>
</feature>
<feature type="binding site" evidence="4 27">
    <location>
        <position position="471"/>
    </location>
    <ligand>
        <name>Mg(2+)</name>
        <dbReference type="ChEBI" id="CHEBI:18420"/>
    </ligand>
</feature>
<feature type="binding site" evidence="4 27">
    <location>
        <position position="473"/>
    </location>
    <ligand>
        <name>Mg(2+)</name>
        <dbReference type="ChEBI" id="CHEBI:18420"/>
    </ligand>
</feature>
<feature type="binding site" evidence="25">
    <location>
        <position position="477"/>
    </location>
    <ligand>
        <name>pyruvate</name>
        <dbReference type="ChEBI" id="CHEBI:15361"/>
        <label>1</label>
        <note>substrate; ligand shared between two neighboring subunits</note>
    </ligand>
</feature>
<feature type="modified residue" description="N-acetylserine" evidence="3 19">
    <location>
        <position position="2"/>
    </location>
</feature>
<feature type="modified residue" description="Omega-N-methylarginine" evidence="13">
    <location>
        <position position="161"/>
    </location>
</feature>
<feature type="modified residue" description="Phosphoserine" evidence="28 29 30">
    <location>
        <position position="223"/>
    </location>
</feature>
<feature type="modified residue" description="Phosphothreonine" evidence="29">
    <location>
        <position position="266"/>
    </location>
</feature>
<feature type="modified residue" description="Phosphothreonine" evidence="30">
    <location>
        <position position="336"/>
    </location>
</feature>
<feature type="modified residue" description="Phosphothreonine" evidence="28 30">
    <location>
        <position position="353"/>
    </location>
</feature>
<feature type="modified residue" description="Phosphothreonine" evidence="30">
    <location>
        <position position="522"/>
    </location>
</feature>
<feature type="modified residue" description="Phosphoserine" evidence="29">
    <location>
        <position position="526"/>
    </location>
</feature>
<feature type="cross-link" description="Glycyl lysine isopeptide (Lys-Gly) (interchain with G-Cter in ubiquitin)" evidence="31">
    <location>
        <position position="212"/>
    </location>
</feature>
<feature type="cross-link" description="Glycyl lysine isopeptide (Lys-Gly) (interchain with G-Cter in ubiquitin)" evidence="31">
    <location>
        <position position="233"/>
    </location>
</feature>
<feature type="cross-link" description="Glycyl lysine isopeptide (Lys-Gly) (interchain with G-Cter in ubiquitin)" evidence="31">
    <location>
        <position position="269"/>
    </location>
</feature>
<feature type="cross-link" description="Glycyl lysine isopeptide (Lys-Gly) (interchain with G-Cter in ubiquitin)" evidence="31">
    <location>
        <position position="332"/>
    </location>
</feature>
<feature type="cross-link" description="Glycyl lysine isopeptide (Lys-Gly) (interchain with G-Cter in ubiquitin)" evidence="31">
    <location>
        <position position="484"/>
    </location>
</feature>
<feature type="cross-link" description="Glycyl lysine isopeptide (Lys-Gly) (interchain with G-Cter in ubiquitin)" evidence="31">
    <location>
        <position position="505"/>
    </location>
</feature>
<feature type="cross-link" description="Glycyl lysine isopeptide (Lys-Gly) (interchain with G-Cter in ubiquitin)" evidence="31">
    <location>
        <position position="520"/>
    </location>
</feature>
<feature type="mutagenesis site" description="In PDC1-8; reduces catalytic activity to 10% but retains autoregulatory activity." evidence="15">
    <original>D</original>
    <variation>N</variation>
    <location>
        <position position="291"/>
    </location>
</feature>
<feature type="sequence conflict" description="In Ref. 1; CAA54522." evidence="24" ref="1">
    <original>A</original>
    <variation>R</variation>
    <location>
        <position position="55"/>
    </location>
</feature>
<feature type="sequence conflict" description="In Ref. 1; CAA28380/CAA54522/CAA54518/CAA54521." evidence="24" ref="1">
    <original>A</original>
    <variation>S</variation>
    <location>
        <position position="106"/>
    </location>
</feature>
<feature type="sequence conflict" description="In Ref. 1; CAA28380." evidence="24" ref="1">
    <location>
        <position position="115"/>
    </location>
</feature>
<feature type="sequence conflict" description="In Ref. 1; CAA54522/CAA54518/CAA54521." evidence="24" ref="1">
    <original>A</original>
    <variation>C</variation>
    <location>
        <position position="143"/>
    </location>
</feature>
<feature type="sequence conflict" description="In Ref. 1; CAA28380." evidence="24" ref="1">
    <original>AP</original>
    <variation>PQ</variation>
    <location>
        <begin position="145"/>
        <end position="146"/>
    </location>
</feature>
<feature type="sequence conflict" description="In Ref. 1; CAA28380." evidence="24" ref="1">
    <original>A</original>
    <variation>V</variation>
    <location>
        <position position="206"/>
    </location>
</feature>
<feature type="sequence conflict" description="In Ref. 1; CAA54522." evidence="24" ref="1">
    <original>V</original>
    <variation>A</variation>
    <location>
        <position position="208"/>
    </location>
</feature>
<feature type="sequence conflict" description="In Ref. 1; CAA28380/CAA54522/CAA54518/CAA54521." evidence="24" ref="1">
    <original>D</original>
    <variation>S</variation>
    <location>
        <position position="253"/>
    </location>
</feature>
<feature type="sequence conflict" description="In Ref. 1; CAA28380/CAA54522/CAA54518/CAA54521." evidence="24" ref="1">
    <original>T</original>
    <variation>N</variation>
    <location>
        <position position="336"/>
    </location>
</feature>
<feature type="sequence conflict" description="In Ref. 1; CAA28380/CAA54522/CAA54518/CAA54521." evidence="24" ref="1">
    <original>I</original>
    <variation>V</variation>
    <location>
        <position position="538"/>
    </location>
</feature>
<feature type="sequence conflict" description="In Ref. 1; CAA28380." evidence="24" ref="1">
    <original>APQNLVEQAKLTAATNAKQ</original>
    <variation>CSTKLG</variation>
    <location>
        <begin position="545"/>
        <end position="563"/>
    </location>
</feature>
<feature type="strand" evidence="33">
    <location>
        <begin position="3"/>
        <end position="5"/>
    </location>
</feature>
<feature type="helix" evidence="33">
    <location>
        <begin position="6"/>
        <end position="16"/>
    </location>
</feature>
<feature type="strand" evidence="33">
    <location>
        <begin position="21"/>
        <end position="24"/>
    </location>
</feature>
<feature type="helix" evidence="33">
    <location>
        <begin position="28"/>
        <end position="30"/>
    </location>
</feature>
<feature type="helix" evidence="33">
    <location>
        <begin position="31"/>
        <end position="35"/>
    </location>
</feature>
<feature type="helix" evidence="33">
    <location>
        <begin position="36"/>
        <end position="39"/>
    </location>
</feature>
<feature type="helix" evidence="33">
    <location>
        <begin position="51"/>
        <end position="65"/>
    </location>
</feature>
<feature type="strand" evidence="33">
    <location>
        <begin position="68"/>
        <end position="73"/>
    </location>
</feature>
<feature type="helix" evidence="33">
    <location>
        <begin position="76"/>
        <end position="91"/>
    </location>
</feature>
<feature type="strand" evidence="33">
    <location>
        <begin position="95"/>
        <end position="101"/>
    </location>
</feature>
<feature type="helix" evidence="33">
    <location>
        <begin position="104"/>
        <end position="108"/>
    </location>
</feature>
<feature type="strand" evidence="32">
    <location>
        <begin position="109"/>
        <end position="111"/>
    </location>
</feature>
<feature type="strand" evidence="32">
    <location>
        <begin position="114"/>
        <end position="116"/>
    </location>
</feature>
<feature type="strand" evidence="33">
    <location>
        <begin position="118"/>
        <end position="120"/>
    </location>
</feature>
<feature type="helix" evidence="33">
    <location>
        <begin position="124"/>
        <end position="130"/>
    </location>
</feature>
<feature type="strand" evidence="33">
    <location>
        <begin position="134"/>
        <end position="138"/>
    </location>
</feature>
<feature type="turn" evidence="33">
    <location>
        <begin position="142"/>
        <end position="144"/>
    </location>
</feature>
<feature type="helix" evidence="33">
    <location>
        <begin position="145"/>
        <end position="159"/>
    </location>
</feature>
<feature type="strand" evidence="33">
    <location>
        <begin position="163"/>
        <end position="168"/>
    </location>
</feature>
<feature type="helix" evidence="33">
    <location>
        <begin position="171"/>
        <end position="173"/>
    </location>
</feature>
<feature type="strand" evidence="33">
    <location>
        <begin position="174"/>
        <end position="177"/>
    </location>
</feature>
<feature type="helix" evidence="33">
    <location>
        <begin position="178"/>
        <end position="182"/>
    </location>
</feature>
<feature type="helix" evidence="33">
    <location>
        <begin position="194"/>
        <end position="210"/>
    </location>
</feature>
<feature type="strand" evidence="33">
    <location>
        <begin position="212"/>
        <end position="218"/>
    </location>
</feature>
<feature type="helix" evidence="33">
    <location>
        <begin position="220"/>
        <end position="224"/>
    </location>
</feature>
<feature type="helix" evidence="33">
    <location>
        <begin position="228"/>
        <end position="238"/>
    </location>
</feature>
<feature type="strand" evidence="33">
    <location>
        <begin position="242"/>
        <end position="244"/>
    </location>
</feature>
<feature type="turn" evidence="33">
    <location>
        <begin position="246"/>
        <end position="250"/>
    </location>
</feature>
<feature type="strand" evidence="33">
    <location>
        <begin position="259"/>
        <end position="262"/>
    </location>
</feature>
<feature type="helix" evidence="33">
    <location>
        <begin position="265"/>
        <end position="267"/>
    </location>
</feature>
<feature type="helix" evidence="33">
    <location>
        <begin position="270"/>
        <end position="277"/>
    </location>
</feature>
<feature type="strand" evidence="33">
    <location>
        <begin position="280"/>
        <end position="286"/>
    </location>
</feature>
<feature type="turn" evidence="33">
    <location>
        <begin position="291"/>
        <end position="297"/>
    </location>
</feature>
<feature type="strand" evidence="33">
    <location>
        <begin position="306"/>
        <end position="309"/>
    </location>
</feature>
<feature type="strand" evidence="33">
    <location>
        <begin position="311"/>
        <end position="316"/>
    </location>
</feature>
<feature type="strand" evidence="33">
    <location>
        <begin position="319"/>
        <end position="322"/>
    </location>
</feature>
<feature type="helix" evidence="33">
    <location>
        <begin position="326"/>
        <end position="340"/>
    </location>
</feature>
<feature type="turn" evidence="33">
    <location>
        <begin position="341"/>
        <end position="343"/>
    </location>
</feature>
<feature type="helix" evidence="33">
    <location>
        <begin position="367"/>
        <end position="374"/>
    </location>
</feature>
<feature type="turn" evidence="33">
    <location>
        <begin position="375"/>
        <end position="377"/>
    </location>
</feature>
<feature type="strand" evidence="33">
    <location>
        <begin position="383"/>
        <end position="386"/>
    </location>
</feature>
<feature type="helix" evidence="33">
    <location>
        <begin position="390"/>
        <end position="394"/>
    </location>
</feature>
<feature type="helix" evidence="33">
    <location>
        <begin position="395"/>
        <end position="397"/>
    </location>
</feature>
<feature type="strand" evidence="33">
    <location>
        <begin position="405"/>
        <end position="407"/>
    </location>
</feature>
<feature type="turn" evidence="33">
    <location>
        <begin position="410"/>
        <end position="412"/>
    </location>
</feature>
<feature type="helix" evidence="33">
    <location>
        <begin position="417"/>
        <end position="432"/>
    </location>
</feature>
<feature type="strand" evidence="33">
    <location>
        <begin position="438"/>
        <end position="443"/>
    </location>
</feature>
<feature type="helix" evidence="33">
    <location>
        <begin position="444"/>
        <end position="450"/>
    </location>
</feature>
<feature type="helix" evidence="33">
    <location>
        <begin position="451"/>
        <end position="453"/>
    </location>
</feature>
<feature type="helix" evidence="33">
    <location>
        <begin position="454"/>
        <end position="459"/>
    </location>
</feature>
<feature type="strand" evidence="33">
    <location>
        <begin position="465"/>
        <end position="473"/>
    </location>
</feature>
<feature type="helix" evidence="33">
    <location>
        <begin position="475"/>
        <end position="480"/>
    </location>
</feature>
<feature type="helix" evidence="33">
    <location>
        <begin position="486"/>
        <end position="488"/>
    </location>
</feature>
<feature type="helix" evidence="33">
    <location>
        <begin position="495"/>
        <end position="497"/>
    </location>
</feature>
<feature type="helix" evidence="33">
    <location>
        <begin position="498"/>
        <end position="501"/>
    </location>
</feature>
<feature type="strand" evidence="33">
    <location>
        <begin position="505"/>
        <end position="512"/>
    </location>
</feature>
<feature type="helix" evidence="33">
    <location>
        <begin position="515"/>
        <end position="522"/>
    </location>
</feature>
<feature type="turn" evidence="33">
    <location>
        <begin position="525"/>
        <end position="528"/>
    </location>
</feature>
<feature type="strand" evidence="33">
    <location>
        <begin position="531"/>
        <end position="539"/>
    </location>
</feature>
<feature type="helix" evidence="33">
    <location>
        <begin position="547"/>
        <end position="561"/>
    </location>
</feature>
<protein>
    <recommendedName>
        <fullName evidence="23">Pyruvate decarboxylase isozyme 1</fullName>
        <ecNumber evidence="12 14">4.1.1.-</ecNumber>
        <ecNumber evidence="7">4.1.1.43</ecNumber>
        <ecNumber evidence="5 22">4.1.1.72</ecNumber>
        <ecNumber evidence="7">4.1.1.74</ecNumber>
    </recommendedName>
    <alternativeName>
        <fullName>Thiamine pyrophosphate-dependent 2-oxo-acid decarboxylase</fullName>
        <shortName>2ODC</shortName>
    </alternativeName>
</protein>
<reference key="1">
    <citation type="journal article" date="1986" name="Nucleic Acids Res.">
        <title>Analysis of the primary structure and promoter function of a pyruvate decarboxylase gene (PDC1) from Saccharomyces cerevisiae.</title>
        <authorList>
            <person name="Kellermann E."/>
            <person name="Seeboth P.G."/>
            <person name="Hollenberg C.P."/>
        </authorList>
    </citation>
    <scope>NUCLEOTIDE SEQUENCE [GENOMIC DNA]</scope>
</reference>
<reference key="2">
    <citation type="journal article" date="1990" name="Eur. J. Biochem.">
        <title>Autoregulation may control the expression of yeast pyruvate decarboxylase structural genes PDC1 and PDC5.</title>
        <authorList>
            <person name="Hohmann S."/>
            <person name="Cederberg H."/>
        </authorList>
    </citation>
    <scope>SEQUENCE REVISION</scope>
</reference>
<reference key="3">
    <citation type="submission" date="1994-01" db="EMBL/GenBank/DDBJ databases">
        <authorList>
            <person name="Hohmann S."/>
        </authorList>
    </citation>
    <scope>SEQUENCE REVISION</scope>
</reference>
<reference key="4">
    <citation type="journal article" date="1997" name="Nature">
        <title>The nucleotide sequence of Saccharomyces cerevisiae chromosome XII.</title>
        <authorList>
            <person name="Johnston M."/>
            <person name="Hillier L.W."/>
            <person name="Riles L."/>
            <person name="Albermann K."/>
            <person name="Andre B."/>
            <person name="Ansorge W."/>
            <person name="Benes V."/>
            <person name="Brueckner M."/>
            <person name="Delius H."/>
            <person name="Dubois E."/>
            <person name="Duesterhoeft A."/>
            <person name="Entian K.-D."/>
            <person name="Floeth M."/>
            <person name="Goffeau A."/>
            <person name="Hebling U."/>
            <person name="Heumann K."/>
            <person name="Heuss-Neitzel D."/>
            <person name="Hilbert H."/>
            <person name="Hilger F."/>
            <person name="Kleine K."/>
            <person name="Koetter P."/>
            <person name="Louis E.J."/>
            <person name="Messenguy F."/>
            <person name="Mewes H.-W."/>
            <person name="Miosga T."/>
            <person name="Moestl D."/>
            <person name="Mueller-Auer S."/>
            <person name="Nentwich U."/>
            <person name="Obermaier B."/>
            <person name="Piravandi E."/>
            <person name="Pohl T.M."/>
            <person name="Portetelle D."/>
            <person name="Purnelle B."/>
            <person name="Rechmann S."/>
            <person name="Rieger M."/>
            <person name="Rinke M."/>
            <person name="Rose M."/>
            <person name="Scharfe M."/>
            <person name="Scherens B."/>
            <person name="Scholler P."/>
            <person name="Schwager C."/>
            <person name="Schwarz S."/>
            <person name="Underwood A.P."/>
            <person name="Urrestarazu L.A."/>
            <person name="Vandenbol M."/>
            <person name="Verhasselt P."/>
            <person name="Vierendeels F."/>
            <person name="Voet M."/>
            <person name="Volckaert G."/>
            <person name="Voss H."/>
            <person name="Wambutt R."/>
            <person name="Wedler E."/>
            <person name="Wedler H."/>
            <person name="Zimmermann F.K."/>
            <person name="Zollner A."/>
            <person name="Hani J."/>
            <person name="Hoheisel J.D."/>
        </authorList>
    </citation>
    <scope>NUCLEOTIDE SEQUENCE [LARGE SCALE GENOMIC DNA]</scope>
    <source>
        <strain>ATCC 204508 / S288c</strain>
    </source>
</reference>
<reference key="5">
    <citation type="journal article" date="2014" name="G3 (Bethesda)">
        <title>The reference genome sequence of Saccharomyces cerevisiae: Then and now.</title>
        <authorList>
            <person name="Engel S.R."/>
            <person name="Dietrich F.S."/>
            <person name="Fisk D.G."/>
            <person name="Binkley G."/>
            <person name="Balakrishnan R."/>
            <person name="Costanzo M.C."/>
            <person name="Dwight S.S."/>
            <person name="Hitz B.C."/>
            <person name="Karra K."/>
            <person name="Nash R.S."/>
            <person name="Weng S."/>
            <person name="Wong E.D."/>
            <person name="Lloyd P."/>
            <person name="Skrzypek M.S."/>
            <person name="Miyasato S.R."/>
            <person name="Simison M."/>
            <person name="Cherry J.M."/>
        </authorList>
    </citation>
    <scope>GENOME REANNOTATION</scope>
    <source>
        <strain>ATCC 204508 / S288c</strain>
    </source>
</reference>
<reference key="6">
    <citation type="submission" date="1994-02" db="EMBL/GenBank/DDBJ databases">
        <authorList>
            <person name="Eberhardt I."/>
            <person name="Cederberg H."/>
            <person name="Hohmann S."/>
        </authorList>
    </citation>
    <scope>NUCLEOTIDE SEQUENCE [GENOMIC DNA] (MUTANTS PDC1-8 AND PDC1-803)</scope>
</reference>
<reference key="7">
    <citation type="journal article" date="1994" name="Electrophoresis">
        <title>Protein identifications for a Saccharomyces cerevisiae protein database.</title>
        <authorList>
            <person name="Garrels J.I."/>
            <person name="Futcher B."/>
            <person name="Kobayashi R."/>
            <person name="Latter G.I."/>
            <person name="Schwender B."/>
            <person name="Volpe T."/>
            <person name="Warner J.R."/>
            <person name="McLaughlin C.S."/>
        </authorList>
    </citation>
    <scope>PROTEIN SEQUENCE OF 37-52</scope>
    <source>
        <strain>ATCC 204508 / S288c</strain>
    </source>
</reference>
<reference key="8">
    <citation type="journal article" date="1995" name="Electrophoresis">
        <title>Gene linkage of two-dimensional polyacrylamide gel electrophoresis resolved proteins from isogene families in Saccharomyces cerevisiae by microsequencing of in-gel trypsin generated peptides.</title>
        <authorList>
            <person name="Norbeck J."/>
            <person name="Blomberg A."/>
        </authorList>
    </citation>
    <scope>PROTEIN SEQUENCE OF 47-57; 260-269; 344-355; 486-497 AND 507-512</scope>
    <source>
        <strain>ATCC 38531 / Y41</strain>
    </source>
</reference>
<reference key="9">
    <citation type="journal article" date="1973" name="Eur. J. Biochem.">
        <title>The influence of steric and electronic parameters on the substrate behavior of 2-oxo acids to yeast pyruvate decarboxylase.</title>
        <authorList>
            <person name="Lehmann H."/>
            <person name="Fischer G."/>
            <person name="Hubner G."/>
            <person name="Kohnert K.D."/>
            <person name="Schellenberger A."/>
        </authorList>
    </citation>
    <scope>FUNCTION</scope>
    <scope>ENZYME ACTIVITY</scope>
</reference>
<reference key="10">
    <citation type="journal article" date="1982" name="J. Bacteriol.">
        <title>Genetic analysis of the pyruvate decarboxylase reaction in yeast glycolysis.</title>
        <authorList>
            <person name="Schmitt H.D."/>
            <person name="Zimmermann F.K."/>
        </authorList>
    </citation>
    <scope>MUTAGENESIS OF ASP-291</scope>
</reference>
<reference key="11">
    <citation type="journal article" date="1984" name="Biochemistry">
        <title>Brewers' yeast pyruvate decarboxylase produces acetoin from acetaldehyde: a novel tool to study the mechanism of steps subsequent to carbon dioxide loss.</title>
        <authorList>
            <person name="Chen G.C."/>
            <person name="Jordan F."/>
        </authorList>
    </citation>
    <scope>FUNCTION</scope>
</reference>
<reference key="12">
    <citation type="journal article" date="1996" name="Mol. Microbiol.">
        <title>ERA, a novel cis-acting element required for autoregulation and ethanol repression of PDC1 transcription in Saccharomyces cerevisiae.</title>
        <authorList>
            <person name="Liesen T."/>
            <person name="Hollenberg C.P."/>
            <person name="Heinisch J.J."/>
        </authorList>
    </citation>
    <scope>FUNCTION</scope>
    <scope>ETHANOL REPRESSION OF EXPRESSION</scope>
</reference>
<reference key="13">
    <citation type="journal article" date="1997" name="Electrophoresis">
        <title>Proteome studies of Saccharomyces cerevisiae: identification and characterization of abundant proteins.</title>
        <authorList>
            <person name="Garrels J.I."/>
            <person name="McLaughlin C.S."/>
            <person name="Warner J.R."/>
            <person name="Futcher B."/>
            <person name="Latter G.I."/>
            <person name="Kobayashi R."/>
            <person name="Schwender B."/>
            <person name="Volpe T."/>
            <person name="Anderson D.S."/>
            <person name="Mesquita-Fuentes R."/>
            <person name="Payne W.E."/>
        </authorList>
    </citation>
    <scope>ACETYLATION AT SER-2</scope>
</reference>
<reference key="14">
    <citation type="journal article" date="1997" name="J. Biol. Chem.">
        <title>A 13C nuclear magnetic resonance investigation of the metabolism of leucine to isoamyl alcohol in Saccharomyces cerevisiae.</title>
        <authorList>
            <person name="Dickinson J.R."/>
            <person name="Lanterman M.M."/>
            <person name="Danner D.J."/>
            <person name="Pearson B.M."/>
            <person name="Sanz P."/>
            <person name="Harrison S.J."/>
            <person name="Hewlins M.J."/>
        </authorList>
    </citation>
    <scope>ROLE IN AMINO ACID CATABOLISM</scope>
</reference>
<reference key="15">
    <citation type="journal article" date="1998" name="J. Biol. Chem.">
        <title>An investigation of the metabolism of valine to isobutyl alcohol in Saccharomyces cerevisiae.</title>
        <authorList>
            <person name="Dickinson J.R."/>
            <person name="Harrison S.J."/>
            <person name="Hewlins M.J."/>
        </authorList>
    </citation>
    <scope>ROLE IN VALINE CATABOLISM</scope>
</reference>
<reference key="16">
    <citation type="journal article" date="1999" name="FEMS Microbiol. Lett.">
        <title>Growth requirements of pyruvate-decarboxylase-negative Saccharomyces cerevisiae.</title>
        <authorList>
            <person name="Flikweert M.T."/>
            <person name="de Swaaf M."/>
            <person name="van Dijken J.P."/>
            <person name="Pronk J.T."/>
        </authorList>
    </citation>
    <scope>FUNCTION</scope>
    <scope>CYTOSOLIC ACETYL-COA PRODUCTION</scope>
</reference>
<reference key="17">
    <citation type="journal article" date="1999" name="Eur. J. Biochem.">
        <title>Autoregulation of yeast pyruvate decarboxylase gene expression requires the enzyme but not its catalytic activity.</title>
        <authorList>
            <person name="Eberhardt I."/>
            <person name="Cederberg H."/>
            <person name="Li H."/>
            <person name="Konig S."/>
            <person name="Jordan F."/>
            <person name="Hohmann S."/>
        </authorList>
    </citation>
    <scope>FUNCTION</scope>
    <scope>AUTOREGULATION OF PDC1 AND PDC5 EXPRESSION</scope>
</reference>
<reference key="18">
    <citation type="journal article" date="1999" name="EMBO J.">
        <title>Identification and specificities of N-terminal acetyltransferases from Saccharomyces cerevisiae.</title>
        <authorList>
            <person name="Polevoda B."/>
            <person name="Norbeck J."/>
            <person name="Takakura H."/>
            <person name="Blomberg A."/>
            <person name="Sherman F."/>
        </authorList>
    </citation>
    <scope>ACETYLATION AT SER-2</scope>
</reference>
<reference key="19">
    <citation type="journal article" date="2000" name="J. Biol. Chem.">
        <title>An investigation of the metabolism of isoleucine to active Amyl alcohol in Saccharomyces cerevisiae.</title>
        <authorList>
            <person name="Dickinson J.R."/>
            <person name="Harrison S.J."/>
            <person name="Dickinson J.A."/>
            <person name="Hewlins M.J."/>
        </authorList>
    </citation>
    <scope>ROLE IN ISOLEUCINE CATABOLISM</scope>
</reference>
<reference key="20">
    <citation type="journal article" date="2000" name="J. Agric. Food Chem.">
        <title>Generation of odorous acyloins by yeast pyruvate decarboxylases and their occurrence in sherry and soy sauce.</title>
        <authorList>
            <person name="Neuser F."/>
            <person name="Zorn H."/>
            <person name="Berger R.G."/>
        </authorList>
    </citation>
    <scope>FUNCTION</scope>
    <scope>GENERATION OF ACYLOINS</scope>
</reference>
<reference key="21">
    <citation type="journal article" date="2003" name="J. Biol. Chem.">
        <title>The catabolism of amino acids to long chain and complex alcohols in Saccharomyces cerevisiae.</title>
        <authorList>
            <person name="Dickinson J.R."/>
            <person name="Salgado L.E."/>
            <person name="Hewlins M.J."/>
        </authorList>
    </citation>
    <scope>ROLE IN PHENYLALANINE; TRYPTOPHAN AND LEUCINE CATABOLISM</scope>
</reference>
<reference key="22">
    <citation type="journal article" date="2003" name="Appl. Environ. Microbiol.">
        <title>Identification and characterization of phenylpyruvate decarboxylase genes in Saccharomyces cerevisiae.</title>
        <authorList>
            <person name="Vuralhan Z."/>
            <person name="Morais M.A."/>
            <person name="Tai S.L."/>
            <person name="Piper M.D."/>
            <person name="Pronk J.T."/>
        </authorList>
    </citation>
    <scope>FUNCTION</scope>
    <scope>AROMATIC AMINO ACIDS AS NITROGEN SOURCE</scope>
</reference>
<reference key="23">
    <citation type="journal article" date="1998" name="Biochim. Biophys. Acta">
        <title>Application of alpha-keto acid decarboxylases in biotransformations.</title>
        <authorList>
            <person name="Iding H."/>
            <person name="Siegert P."/>
            <person name="Mesch K."/>
            <person name="Pohl M."/>
        </authorList>
    </citation>
    <scope>REVIEW</scope>
    <scope>BIOTECHNOLOGICAL RELEVANCE</scope>
</reference>
<reference key="24">
    <citation type="journal article" date="1998" name="Biochim. Biophys. Acta">
        <title>Thiamin metabolism and thiamin diphosphate-dependent enzymes in the yeast Saccharomyces cerevisiae: genetic regulation.</title>
        <authorList>
            <person name="Hohmann S."/>
            <person name="Meacock P.A."/>
        </authorList>
    </citation>
    <scope>REVIEW</scope>
</reference>
<reference key="25">
    <citation type="journal article" date="2003" name="Nature">
        <title>Global analysis of protein localization in budding yeast.</title>
        <authorList>
            <person name="Huh W.-K."/>
            <person name="Falvo J.V."/>
            <person name="Gerke L.C."/>
            <person name="Carroll A.S."/>
            <person name="Howson R.W."/>
            <person name="Weissman J.S."/>
            <person name="O'Shea E.K."/>
        </authorList>
    </citation>
    <scope>SUBCELLULAR LOCATION [LARGE SCALE ANALYSIS]</scope>
</reference>
<reference key="26">
    <citation type="journal article" date="2003" name="Nature">
        <title>Global analysis of protein expression in yeast.</title>
        <authorList>
            <person name="Ghaemmaghami S."/>
            <person name="Huh W.-K."/>
            <person name="Bower K."/>
            <person name="Howson R.W."/>
            <person name="Belle A."/>
            <person name="Dephoure N."/>
            <person name="O'Shea E.K."/>
            <person name="Weissman J.S."/>
        </authorList>
    </citation>
    <scope>LEVEL OF PROTEIN EXPRESSION [LARGE SCALE ANALYSIS]</scope>
</reference>
<reference key="27">
    <citation type="journal article" date="2007" name="J. Proteome Res.">
        <title>Large-scale phosphorylation analysis of alpha-factor-arrested Saccharomyces cerevisiae.</title>
        <authorList>
            <person name="Li X."/>
            <person name="Gerber S.A."/>
            <person name="Rudner A.D."/>
            <person name="Beausoleil S.A."/>
            <person name="Haas W."/>
            <person name="Villen J."/>
            <person name="Elias J.E."/>
            <person name="Gygi S.P."/>
        </authorList>
    </citation>
    <scope>PHOSPHORYLATION [LARGE SCALE ANALYSIS] AT SER-223 AND THR-353</scope>
    <scope>IDENTIFICATION BY MASS SPECTROMETRY [LARGE SCALE ANALYSIS]</scope>
    <source>
        <strain>ADR376</strain>
    </source>
</reference>
<reference key="28">
    <citation type="journal article" date="2008" name="Mol. Cell. Proteomics">
        <title>A multidimensional chromatography technology for in-depth phosphoproteome analysis.</title>
        <authorList>
            <person name="Albuquerque C.P."/>
            <person name="Smolka M.B."/>
            <person name="Payne S.H."/>
            <person name="Bafna V."/>
            <person name="Eng J."/>
            <person name="Zhou H."/>
        </authorList>
    </citation>
    <scope>PHOSPHORYLATION [LARGE SCALE ANALYSIS] AT SER-223; THR-266 AND SER-526</scope>
    <scope>IDENTIFICATION BY MASS SPECTROMETRY [LARGE SCALE ANALYSIS]</scope>
</reference>
<reference key="29">
    <citation type="journal article" date="2009" name="Science">
        <title>Global analysis of Cdk1 substrate phosphorylation sites provides insights into evolution.</title>
        <authorList>
            <person name="Holt L.J."/>
            <person name="Tuch B.B."/>
            <person name="Villen J."/>
            <person name="Johnson A.D."/>
            <person name="Gygi S.P."/>
            <person name="Morgan D.O."/>
        </authorList>
    </citation>
    <scope>PHOSPHORYLATION [LARGE SCALE ANALYSIS] AT SER-223; THR-336; THR-353 AND THR-522</scope>
    <scope>IDENTIFICATION BY MASS SPECTROMETRY [LARGE SCALE ANALYSIS]</scope>
</reference>
<reference key="30">
    <citation type="journal article" date="2012" name="Appl. Environ. Microbiol.">
        <title>Substrate specificity of thiamine pyrophosphate-dependent 2-oxo-acid decarboxylases in Saccharomyces cerevisiae.</title>
        <authorList>
            <person name="Romagnoli G."/>
            <person name="Luttik M.A."/>
            <person name="Koetter P."/>
            <person name="Pronk J.T."/>
            <person name="Daran J.M."/>
        </authorList>
    </citation>
    <scope>CATALYTIC ACTIVITY</scope>
    <scope>BIOPHYSICOCHEMICAL PROPERTIES</scope>
</reference>
<reference key="31">
    <citation type="journal article" date="2012" name="Proteomics">
        <title>Sites of ubiquitin attachment in Saccharomyces cerevisiae.</title>
        <authorList>
            <person name="Starita L.M."/>
            <person name="Lo R.S."/>
            <person name="Eng J.K."/>
            <person name="von Haller P.D."/>
            <person name="Fields S."/>
        </authorList>
    </citation>
    <scope>UBIQUITINATION [LARGE SCALE ANALYSIS] AT LYS-212; LYS-233; LYS-269; LYS-332; LYS-484; LYS-505 AND LYS-520</scope>
    <scope>IDENTIFICATION BY MASS SPECTROMETRY [LARGE SCALE ANALYSIS]</scope>
</reference>
<reference key="32">
    <citation type="journal article" date="2013" name="Biotechnol. Biofuels">
        <title>A novel pathway to produce butanol and isobutanol in Saccharomyces cerevisiae.</title>
        <authorList>
            <person name="Branduardi P."/>
            <person name="Longo V."/>
            <person name="Berterame N.M."/>
            <person name="Rossi G."/>
            <person name="Porro D."/>
        </authorList>
    </citation>
    <scope>FUNCTION IN BUTANOL PRODUCTION</scope>
</reference>
<reference key="33">
    <citation type="journal article" date="2015" name="Proteomics">
        <title>Expanding the yeast protein arginine methylome.</title>
        <authorList>
            <person name="Plank M."/>
            <person name="Fischer R."/>
            <person name="Geoghegan V."/>
            <person name="Charles P.D."/>
            <person name="Konietzny R."/>
            <person name="Acuto O."/>
            <person name="Pears C."/>
            <person name="Schofield C.J."/>
            <person name="Kessler B.M."/>
        </authorList>
    </citation>
    <scope>METHYLATION AT ARG-161</scope>
</reference>
<reference key="34">
    <citation type="journal article" date="1993" name="Biochemistry">
        <title>Catalytic centers in the thiamin diphosphate dependent enzyme pyruvate decarboxylase at 2.4-A resolution.</title>
        <authorList>
            <person name="Dyda F."/>
            <person name="Furey W.F. Jr."/>
            <person name="Swaminathan S."/>
            <person name="Sax M."/>
            <person name="Farrenkopf B."/>
            <person name="Jordan F."/>
        </authorList>
    </citation>
    <scope>X-RAY CRYSTALLOGRAPHY (2.4 ANGSTROMS) OF 1-556 IN COMPLEX WITH THIAMINE PYROPHOSPHATE</scope>
</reference>
<reference key="35">
    <citation type="journal article" date="1996" name="J. Mol. Biol.">
        <title>Crystal structure of the thiamin diphosphate-dependent enzyme pyruvate decarboxylase from the yeast Saccharomyces cerevisiae at 2.3-A resolution.</title>
        <authorList>
            <person name="Arjunan P."/>
            <person name="Umland T."/>
            <person name="Dyda F."/>
            <person name="Swaminathan S."/>
            <person name="Furey W.F. Jr."/>
            <person name="Sax M."/>
            <person name="Farrenkopf B."/>
            <person name="Gao Y."/>
            <person name="Zhang D."/>
            <person name="Jordan F."/>
        </authorList>
    </citation>
    <scope>X-RAY CRYSTALLOGRAPHY (2.3 ANGSTROMS) OF 1-556 IN COMPLEX WITH THIAMINE PYROPHOSPHATE</scope>
</reference>
<reference evidence="27" key="36">
    <citation type="journal article" date="2000" name="Eur. J. Biochem.">
        <title>The structural basis of substrate activation in yeast pyruvate decarboxylase. A crystallographic and kinetic study.</title>
        <authorList>
            <person name="Lu G."/>
            <person name="Dobritzsch D."/>
            <person name="Baumann S."/>
            <person name="Schneider G."/>
            <person name="Koenig S."/>
        </authorList>
    </citation>
    <scope>X-RAY CRYSTALLOGRAPHY (2.4 ANGSTROMS) OF 1-556 IN COMPLEX WITH THIAMINE PYROPHOSPHATE AND SUBSTRATE ANALOG PYRUVAMIDE</scope>
    <scope>SUBSTRATE ACTIVATION</scope>
    <scope>COFACTOR</scope>
</reference>
<keyword id="KW-0002">3D-structure</keyword>
<keyword id="KW-0007">Acetylation</keyword>
<keyword id="KW-0021">Allosteric enzyme</keyword>
<keyword id="KW-0101">Branched-chain amino acid catabolism</keyword>
<keyword id="KW-0963">Cytoplasm</keyword>
<keyword id="KW-0210">Decarboxylase</keyword>
<keyword id="KW-0903">Direct protein sequencing</keyword>
<keyword id="KW-1017">Isopeptide bond</keyword>
<keyword id="KW-0456">Lyase</keyword>
<keyword id="KW-0460">Magnesium</keyword>
<keyword id="KW-0479">Metal-binding</keyword>
<keyword id="KW-0488">Methylation</keyword>
<keyword id="KW-0539">Nucleus</keyword>
<keyword id="KW-0585">Phenylalanine catabolism</keyword>
<keyword id="KW-0597">Phosphoprotein</keyword>
<keyword id="KW-1185">Reference proteome</keyword>
<keyword id="KW-0786">Thiamine pyrophosphate</keyword>
<keyword id="KW-0823">Tryptophan catabolism</keyword>
<keyword id="KW-0832">Ubl conjugation</keyword>
<sequence>MSEITLGKYLFERLKQVNVNTVFGLPGDFNLSLLDKIYEVEGMRWAGNANELNAAYAADGYARIKGMSCIITTFGVGELSALNGIAGSYAEHVGVLHVVGVPSISAQAKQLLLHHTLGNGDFTVFHRMSANISETTAMITDIATAPAEIDRCIRTTYVTQRPVYLGLPANLVDLNVPAKLLQTPIDMSLKPNDAESEKEVIDTILALVKDAKNPVILADACCSRHDVKAETKKLIDLTQFPAFVTPMGKGSIDEQHPRYGGVYVGTLSKPEVKEAVESADLILSVGALLSDFNTGSFSYSYKTKNIVEFHSDHMKIRNATFPGVQMKFVLQKLLTTIADAAKGYKPVAVPARTPANAAVPASTPLKQEWMWNQLGNFLQEGDVVIAETGTSAFGINQTTFPNNTYGISQVLWGSIGFTTGATLGAAFAAEEIDPKKRVILFIGDGSLQLTVQEISTMIRWGLKPYLFVLNNDGYTIEKLIHGPKAQYNEIQGWDHLSLLPTFGAKDYETHRVATTGEWDKLTQDKSFNDNSKIRMIEIMLPVFDAPQNLVEQAKLTAATNAKQ</sequence>
<gene>
    <name evidence="23" type="primary">PDC1</name>
    <name type="ordered locus">YLR044C</name>
    <name type="ORF">L2104</name>
</gene>
<name>PDC1_YEAST</name>
<organism>
    <name type="scientific">Saccharomyces cerevisiae (strain ATCC 204508 / S288c)</name>
    <name type="common">Baker's yeast</name>
    <dbReference type="NCBI Taxonomy" id="559292"/>
    <lineage>
        <taxon>Eukaryota</taxon>
        <taxon>Fungi</taxon>
        <taxon>Dikarya</taxon>
        <taxon>Ascomycota</taxon>
        <taxon>Saccharomycotina</taxon>
        <taxon>Saccharomycetes</taxon>
        <taxon>Saccharomycetales</taxon>
        <taxon>Saccharomycetaceae</taxon>
        <taxon>Saccharomyces</taxon>
    </lineage>
</organism>
<accession>P06169</accession>
<accession>D6VY46</accession>
<accession>O00042</accession>
<accession>Q07991</accession>
<accession>Q12682</accession>
<accession>Q12686</accession>
<accession>Q12687</accession>
<comment type="function">
    <text evidence="1 2 5 6 7 8 11 14 18 20 22">Major of three pyruvate decarboxylases (PDC1, PDC5, PDC6) implicated in the nonoxidative conversion of pyruvate to acetaldehyde and carbon dioxide during alcoholic fermentation. Most of the produced acetaldehyde is subsequently reduced to ethanol, but some is required for cytosolic acetyl-CoA production for biosynthetic pathways. The enzyme is also one of five 2-oxo acid decarboxylases (PDC1, PDC5, PDC6, ARO10, and THI3) able to decarboxylate more complex 2-oxo acids (alpha-ketoacids) than pyruvate, which seem mainly involved in amino acid catabolism. Here the enzyme catalyzes the decarboxylation of amino acids, which, in a first step, have been transaminated to the corresponding 2-oxo acids. In a third step, the resulting aldehydes are reduced to alcohols, collectively referred to as fusel oils or alcohols. Its preferred substrates are the transaminated amino acids derived from threonine (2-oxobutanoate), norvaline (2-oxopentanoate), valine (3-methyl-2-oxobutanoate, also alpha-keto-isovalerate), isoleucine ((3S)-3-methyl-2-oxopentanoate, also alpha-keto-beta-methylvalerate), phenylalanine (phenylpyruvate), and tryptophan (3-(indol-3-yl)pyruvate), whereas transaminated leucine is no substrate. In a side-reaction the carbanionic intermediate (or active aldehyde) generated by decarboxylation or by activation of an aldehyde can react with an aldehyde via condensation (or carboligation) yielding a 2-hydroxy ketone, collectively called acyloins.</text>
</comment>
<comment type="catalytic activity">
    <reaction evidence="14">
        <text>pyruvate + H(+) = acetaldehyde + CO2</text>
        <dbReference type="Rhea" id="RHEA:45484"/>
        <dbReference type="ChEBI" id="CHEBI:15343"/>
        <dbReference type="ChEBI" id="CHEBI:15361"/>
        <dbReference type="ChEBI" id="CHEBI:15378"/>
        <dbReference type="ChEBI" id="CHEBI:16526"/>
    </reaction>
</comment>
<comment type="catalytic activity">
    <reaction evidence="22">
        <text>3-methyl-2-oxobutanoate + H(+) = 2-methylpropanal + CO2</text>
        <dbReference type="Rhea" id="RHEA:54356"/>
        <dbReference type="ChEBI" id="CHEBI:11851"/>
        <dbReference type="ChEBI" id="CHEBI:15378"/>
        <dbReference type="ChEBI" id="CHEBI:16526"/>
        <dbReference type="ChEBI" id="CHEBI:48943"/>
        <dbReference type="EC" id="4.1.1.72"/>
    </reaction>
</comment>
<comment type="catalytic activity">
    <reaction evidence="5">
        <text>(S)-3-methyl-2-oxopentanoate + H(+) = 2-methylbutanal + CO2</text>
        <dbReference type="Rhea" id="RHEA:21108"/>
        <dbReference type="ChEBI" id="CHEBI:15378"/>
        <dbReference type="ChEBI" id="CHEBI:16182"/>
        <dbReference type="ChEBI" id="CHEBI:16526"/>
        <dbReference type="ChEBI" id="CHEBI:35146"/>
        <dbReference type="EC" id="4.1.1.72"/>
    </reaction>
</comment>
<comment type="catalytic activity">
    <reaction evidence="7">
        <text>indole-3-pyruvate + H(+) = indole-3-acetaldehyde + CO2</text>
        <dbReference type="Rhea" id="RHEA:18017"/>
        <dbReference type="ChEBI" id="CHEBI:15378"/>
        <dbReference type="ChEBI" id="CHEBI:16526"/>
        <dbReference type="ChEBI" id="CHEBI:17640"/>
        <dbReference type="ChEBI" id="CHEBI:18086"/>
        <dbReference type="EC" id="4.1.1.74"/>
    </reaction>
</comment>
<comment type="catalytic activity">
    <reaction evidence="7">
        <text>3-phenylpyruvate + H(+) = 2-phenylacetaldehyde + CO2</text>
        <dbReference type="Rhea" id="RHEA:14185"/>
        <dbReference type="ChEBI" id="CHEBI:15378"/>
        <dbReference type="ChEBI" id="CHEBI:16424"/>
        <dbReference type="ChEBI" id="CHEBI:16526"/>
        <dbReference type="ChEBI" id="CHEBI:18005"/>
        <dbReference type="EC" id="4.1.1.43"/>
    </reaction>
</comment>
<comment type="catalytic activity">
    <reaction evidence="11">
        <text>2-oxobutanoate + H(+) = propanal + CO2</text>
        <dbReference type="Rhea" id="RHEA:55072"/>
        <dbReference type="ChEBI" id="CHEBI:15378"/>
        <dbReference type="ChEBI" id="CHEBI:16526"/>
        <dbReference type="ChEBI" id="CHEBI:16763"/>
        <dbReference type="ChEBI" id="CHEBI:17153"/>
    </reaction>
</comment>
<comment type="catalytic activity">
    <reaction evidence="11 12">
        <text>2-oxopentanoate + H(+) = butanal + CO2</text>
        <dbReference type="Rhea" id="RHEA:50312"/>
        <dbReference type="ChEBI" id="CHEBI:15378"/>
        <dbReference type="ChEBI" id="CHEBI:15743"/>
        <dbReference type="ChEBI" id="CHEBI:16526"/>
        <dbReference type="ChEBI" id="CHEBI:28644"/>
    </reaction>
</comment>
<comment type="catalytic activity">
    <reaction evidence="6 26">
        <text>2 acetaldehyde = acetoin</text>
        <dbReference type="Rhea" id="RHEA:54364"/>
        <dbReference type="ChEBI" id="CHEBI:15343"/>
        <dbReference type="ChEBI" id="CHEBI:15688"/>
    </reaction>
</comment>
<comment type="catalytic activity">
    <reaction evidence="6 26">
        <text>acetaldehyde + pyruvate + H(+) = acetoin + CO2</text>
        <dbReference type="Rhea" id="RHEA:54368"/>
        <dbReference type="ChEBI" id="CHEBI:15343"/>
        <dbReference type="ChEBI" id="CHEBI:15361"/>
        <dbReference type="ChEBI" id="CHEBI:15378"/>
        <dbReference type="ChEBI" id="CHEBI:15688"/>
        <dbReference type="ChEBI" id="CHEBI:16526"/>
    </reaction>
</comment>
<comment type="cofactor">
    <cofactor evidence="4">
        <name>Mg(2+)</name>
        <dbReference type="ChEBI" id="CHEBI:18420"/>
    </cofactor>
    <text evidence="4">Binds 1 Mg(2+) per subunit.</text>
</comment>
<comment type="cofactor">
    <cofactor evidence="4">
        <name>thiamine diphosphate</name>
        <dbReference type="ChEBI" id="CHEBI:58937"/>
    </cofactor>
    <text evidence="4">Binds 1 thiamine pyrophosphate per subunit.</text>
</comment>
<comment type="activity regulation">
    <text evidence="4">Allosterically activated by its substrate, pyruvate.</text>
</comment>
<comment type="biophysicochemical properties">
    <kinetics>
        <KM evidence="11">2.8 mM for pyruvate</KM>
        <KM evidence="11">1 mM for 2-oxobutanoate</KM>
        <KM evidence="11">1.5 mM for 2-oxopentanoate</KM>
        <Vmax evidence="11">1.5 umol/min/mg enzyme for pyruvate</Vmax>
        <Vmax evidence="11">0.5 umol/min/mg enzyme for 2-oxobutanoate</Vmax>
        <Vmax evidence="11">0.4 umol/min/mg enzyme for 2-oxopentanoate</Vmax>
        <Vmax evidence="11">38.0 umol/min/mg enzyme for 3-methyl-2-oxobutanoate</Vmax>
        <Vmax evidence="11">15.0 umol/min/mg enzyme for 4-methyl-2-oxopentanoate</Vmax>
        <Vmax evidence="11">9.0 umol/min/mg enzyme for 3-methyl-2-oxopentanoate</Vmax>
        <Vmax evidence="11">41.0 umol/min/mg enzyme for 4-methylthio-2-oxobutanoate</Vmax>
    </kinetics>
</comment>
<comment type="pathway">
    <text>Fermentation; ethanol fermentation.</text>
</comment>
<comment type="pathway">
    <text>Amino-acid degradation; Ehrlich pathway.</text>
</comment>
<comment type="subunit">
    <text evidence="4 16 17">Homotetramer.</text>
</comment>
<comment type="interaction">
    <interactant intactId="EBI-5687">
        <id>P06169</id>
    </interactant>
    <interactant intactId="EBI-5696">
        <id>P16467</id>
        <label>PDC5</label>
    </interactant>
    <organismsDiffer>false</organismsDiffer>
    <experiments>2</experiments>
</comment>
<comment type="subcellular location">
    <subcellularLocation>
        <location evidence="9">Cytoplasm</location>
    </subcellularLocation>
    <subcellularLocation>
        <location evidence="9">Nucleus</location>
    </subcellularLocation>
</comment>
<comment type="induction">
    <text>Protein expression is strongly induced by high concentrations of fermentable carbon sources and under anaerobic growth conditions and is repressed by ethanol. Protein expression level is also autoregulated through an unknown mechanism.</text>
</comment>
<comment type="PTM">
    <text evidence="3 19">Cleavage of N-terminal methionine and N-terminal acetylation by NAT1/ARD1.</text>
</comment>
<comment type="biotechnology">
    <text evidence="21">Fusel oils and acyloins are important flavor and aroma compounds in yeast-fermented products contributing to the quality of beverages and food, e.g. fusel oils in whiskey, contrary to common believe, seem to alleviate hangover. In general they are desirable at low concentrations, whereas high concentrations may spoil the product. By adjusting growth conditions and substrate their production is sought to be influenced. Due to their broad substrate tolerance pyruvate decarboxylases are important biocatalysts for chemoenzymatic syntheses, both by fermentation and in vitro, e.g. in the production of ephedrine, vitamin E, or phenylethanol (rose flavor).</text>
</comment>
<comment type="miscellaneous">
    <text evidence="10">Present with 8966 molecules/cell in log phase SD medium.</text>
</comment>
<comment type="similarity">
    <text evidence="24">Belongs to the TPP enzyme family.</text>
</comment>